<gene>
    <name type="ORF">2a</name>
</gene>
<evidence type="ECO:0000305" key="1"/>
<comment type="similarity">
    <text evidence="1">Belongs to the coronaviruses ns2a protein family.</text>
</comment>
<organism>
    <name type="scientific">Bovine coronavirus (strain LSU-94LSS-051)</name>
    <name type="common">BCoV-LSU</name>
    <name type="synonym">BCV</name>
    <dbReference type="NCBI Taxonomy" id="233261"/>
    <lineage>
        <taxon>Viruses</taxon>
        <taxon>Riboviria</taxon>
        <taxon>Orthornavirae</taxon>
        <taxon>Pisuviricota</taxon>
        <taxon>Pisoniviricetes</taxon>
        <taxon>Nidovirales</taxon>
        <taxon>Cornidovirineae</taxon>
        <taxon>Coronaviridae</taxon>
        <taxon>Orthocoronavirinae</taxon>
        <taxon>Betacoronavirus</taxon>
        <taxon>Embecovirus</taxon>
        <taxon>Betacoronavirus 1</taxon>
    </lineage>
</organism>
<dbReference type="EMBL" id="AF058943">
    <property type="protein sequence ID" value="AAF25507.1"/>
    <property type="molecule type" value="Genomic_RNA"/>
</dbReference>
<dbReference type="SMR" id="P0C2R3"/>
<dbReference type="Gene3D" id="3.90.1140.10">
    <property type="entry name" value="Cyclic phosphodiesterase"/>
    <property type="match status" value="1"/>
</dbReference>
<dbReference type="InterPro" id="IPR007878">
    <property type="entry name" value="Coronavirus_NS2A"/>
</dbReference>
<dbReference type="InterPro" id="IPR039573">
    <property type="entry name" value="NS2A-like"/>
</dbReference>
<dbReference type="Pfam" id="PF05213">
    <property type="entry name" value="Corona_NS2A"/>
    <property type="match status" value="1"/>
</dbReference>
<dbReference type="PIRSF" id="PIRSF003890">
    <property type="entry name" value="LigT_coronavirus"/>
    <property type="match status" value="1"/>
</dbReference>
<reference key="1">
    <citation type="journal article" date="1998" name="Virus Genes">
        <title>Nucleotide and predicted amino acid sequences of all genes encoded by the 3' genomic portion (9.5 kb) of respiratory bovine coronaviruses and comparisons among respiratory and enteric coronaviruses.</title>
        <authorList>
            <person name="Chouljenko V.N."/>
            <person name="Kousoulas K.G."/>
            <person name="Lin X.Q."/>
            <person name="Storz J."/>
        </authorList>
    </citation>
    <scope>NUCLEOTIDE SEQUENCE [GENOMIC RNA]</scope>
    <source>
        <strain>Isolate LSU-94LSS-051-2</strain>
    </source>
</reference>
<protein>
    <recommendedName>
        <fullName>Non-structural protein 2a</fullName>
        <shortName>ns2a</shortName>
    </recommendedName>
    <alternativeName>
        <fullName>32 kDa accessory protein</fullName>
    </alternativeName>
    <alternativeName>
        <fullName>32 kDa non-structural protein</fullName>
    </alternativeName>
    <alternativeName>
        <fullName>ns2</fullName>
    </alternativeName>
</protein>
<proteinExistence type="inferred from homology"/>
<accession>P0C2R3</accession>
<accession>Q9PX17</accession>
<name>NS2A_CVBLS</name>
<sequence>MAVAYADKPNHFINFPLTQFQGFVLNYKGLQFQLLDEGVDCKIQTAPHISLAMLDIQPEDYRSVDVAIQEVIDDMHWGEGFQIKFENPHILGRCIVLDVKGVEELHDDLVNYIRDKGCVADQSRKWIGHCTIAQLTDAALSIKENVDFINSMQFNYKITINPSSPARLEIVKLGAEKKDGFYETIASHWMGIRFEYNPPTDKLAMIMGYCCSEVVRKELEEGDLPENDDDAWFKLSYHYENNSWFFRHVYRKSSYFRKSCQNLDCNCLGFYESSVEED</sequence>
<organismHost>
    <name type="scientific">Bos taurus</name>
    <name type="common">Bovine</name>
    <dbReference type="NCBI Taxonomy" id="9913"/>
</organismHost>
<feature type="chain" id="PRO_0000283933" description="Non-structural protein 2a">
    <location>
        <begin position="1"/>
        <end position="278"/>
    </location>
</feature>